<keyword id="KW-0007">Acetylation</keyword>
<keyword id="KW-0963">Cytoplasm</keyword>
<keyword id="KW-0597">Phosphoprotein</keyword>
<keyword id="KW-1185">Reference proteome</keyword>
<organism>
    <name type="scientific">Mus musculus</name>
    <name type="common">Mouse</name>
    <dbReference type="NCBI Taxonomy" id="10090"/>
    <lineage>
        <taxon>Eukaryota</taxon>
        <taxon>Metazoa</taxon>
        <taxon>Chordata</taxon>
        <taxon>Craniata</taxon>
        <taxon>Vertebrata</taxon>
        <taxon>Euteleostomi</taxon>
        <taxon>Mammalia</taxon>
        <taxon>Eutheria</taxon>
        <taxon>Euarchontoglires</taxon>
        <taxon>Glires</taxon>
        <taxon>Rodentia</taxon>
        <taxon>Myomorpha</taxon>
        <taxon>Muroidea</taxon>
        <taxon>Muridae</taxon>
        <taxon>Murinae</taxon>
        <taxon>Mus</taxon>
        <taxon>Mus</taxon>
    </lineage>
</organism>
<dbReference type="EMBL" id="AK088366">
    <property type="protein sequence ID" value="BAC40306.1"/>
    <property type="molecule type" value="mRNA"/>
</dbReference>
<dbReference type="EMBL" id="AK132432">
    <property type="protein sequence ID" value="BAE21166.1"/>
    <property type="molecule type" value="mRNA"/>
</dbReference>
<dbReference type="EMBL" id="BC085149">
    <property type="protein sequence ID" value="AAH85149.1"/>
    <property type="molecule type" value="mRNA"/>
</dbReference>
<dbReference type="EMBL" id="AK220163">
    <property type="protein sequence ID" value="BAD90335.1"/>
    <property type="status" value="ALT_INIT"/>
    <property type="molecule type" value="mRNA"/>
</dbReference>
<dbReference type="EMBL" id="U49728">
    <property type="protein sequence ID" value="AAB37234.1"/>
    <property type="status" value="ALT_FRAME"/>
    <property type="molecule type" value="mRNA"/>
</dbReference>
<dbReference type="CCDS" id="CCDS25983.1"/>
<dbReference type="RefSeq" id="NP_036154.1">
    <property type="nucleotide sequence ID" value="NM_012024.3"/>
</dbReference>
<dbReference type="RefSeq" id="XP_006515988.1">
    <property type="nucleotide sequence ID" value="XM_006515925.4"/>
</dbReference>
<dbReference type="SMR" id="Q61151"/>
<dbReference type="BioGRID" id="205071">
    <property type="interactions" value="9"/>
</dbReference>
<dbReference type="FunCoup" id="Q61151">
    <property type="interactions" value="5277"/>
</dbReference>
<dbReference type="IntAct" id="Q61151">
    <property type="interactions" value="2"/>
</dbReference>
<dbReference type="MINT" id="Q61151"/>
<dbReference type="STRING" id="10090.ENSMUSP00000021447"/>
<dbReference type="GlyGen" id="Q61151">
    <property type="glycosylation" value="1 site, 1 O-linked glycan (1 site)"/>
</dbReference>
<dbReference type="iPTMnet" id="Q61151"/>
<dbReference type="PhosphoSitePlus" id="Q61151"/>
<dbReference type="SwissPalm" id="Q61151"/>
<dbReference type="PaxDb" id="10090-ENSMUSP00000021447"/>
<dbReference type="PeptideAtlas" id="Q61151"/>
<dbReference type="ProteomicsDB" id="285888"/>
<dbReference type="Pumba" id="Q61151"/>
<dbReference type="Antibodypedia" id="50">
    <property type="antibodies" value="151 antibodies from 33 providers"/>
</dbReference>
<dbReference type="DNASU" id="26932"/>
<dbReference type="Ensembl" id="ENSMUST00000021447.9">
    <property type="protein sequence ID" value="ENSMUSP00000021447.8"/>
    <property type="gene ID" value="ENSMUSG00000021051.11"/>
</dbReference>
<dbReference type="GeneID" id="26932"/>
<dbReference type="KEGG" id="mmu:26932"/>
<dbReference type="UCSC" id="uc007nxe.1">
    <property type="organism name" value="mouse"/>
</dbReference>
<dbReference type="AGR" id="MGI:1349473"/>
<dbReference type="CTD" id="5529"/>
<dbReference type="MGI" id="MGI:1349473">
    <property type="gene designation" value="Ppp2r5e"/>
</dbReference>
<dbReference type="VEuPathDB" id="HostDB:ENSMUSG00000021051"/>
<dbReference type="eggNOG" id="KOG2085">
    <property type="taxonomic scope" value="Eukaryota"/>
</dbReference>
<dbReference type="GeneTree" id="ENSGT01030000234620"/>
<dbReference type="HOGENOM" id="CLU_012437_4_0_1"/>
<dbReference type="InParanoid" id="Q61151"/>
<dbReference type="OMA" id="MVPLFCR"/>
<dbReference type="OrthoDB" id="10264446at2759"/>
<dbReference type="PhylomeDB" id="Q61151"/>
<dbReference type="TreeFam" id="TF105556"/>
<dbReference type="Reactome" id="R-MMU-141444">
    <property type="pathway name" value="Amplification of signal from unattached kinetochores via a MAD2 inhibitory signal"/>
</dbReference>
<dbReference type="Reactome" id="R-MMU-195253">
    <property type="pathway name" value="Degradation of beta-catenin by the destruction complex"/>
</dbReference>
<dbReference type="Reactome" id="R-MMU-196299">
    <property type="pathway name" value="Beta-catenin phosphorylation cascade"/>
</dbReference>
<dbReference type="Reactome" id="R-MMU-2467813">
    <property type="pathway name" value="Separation of Sister Chromatids"/>
</dbReference>
<dbReference type="Reactome" id="R-MMU-2500257">
    <property type="pathway name" value="Resolution of Sister Chromatid Cohesion"/>
</dbReference>
<dbReference type="Reactome" id="R-MMU-389356">
    <property type="pathway name" value="Co-stimulation by CD28"/>
</dbReference>
<dbReference type="Reactome" id="R-MMU-389513">
    <property type="pathway name" value="Co-inhibition by CTLA4"/>
</dbReference>
<dbReference type="Reactome" id="R-MMU-432142">
    <property type="pathway name" value="Platelet sensitization by LDL"/>
</dbReference>
<dbReference type="Reactome" id="R-MMU-4641262">
    <property type="pathway name" value="Disassembly of the destruction complex and recruitment of AXIN to the membrane"/>
</dbReference>
<dbReference type="Reactome" id="R-MMU-5663220">
    <property type="pathway name" value="RHO GTPases Activate Formins"/>
</dbReference>
<dbReference type="Reactome" id="R-MMU-5673000">
    <property type="pathway name" value="RAF activation"/>
</dbReference>
<dbReference type="Reactome" id="R-MMU-5675221">
    <property type="pathway name" value="Negative regulation of MAPK pathway"/>
</dbReference>
<dbReference type="Reactome" id="R-MMU-6811558">
    <property type="pathway name" value="PI5P, PP2A and IER3 Regulate PI3K/AKT Signaling"/>
</dbReference>
<dbReference type="Reactome" id="R-MMU-68877">
    <property type="pathway name" value="Mitotic Prometaphase"/>
</dbReference>
<dbReference type="Reactome" id="R-MMU-9648025">
    <property type="pathway name" value="EML4 and NUDC in mitotic spindle formation"/>
</dbReference>
<dbReference type="BioGRID-ORCS" id="26932">
    <property type="hits" value="1 hit in 77 CRISPR screens"/>
</dbReference>
<dbReference type="CD-CODE" id="CE726F99">
    <property type="entry name" value="Postsynaptic density"/>
</dbReference>
<dbReference type="ChiTaRS" id="Ppp2r5e">
    <property type="organism name" value="mouse"/>
</dbReference>
<dbReference type="PRO" id="PR:Q61151"/>
<dbReference type="Proteomes" id="UP000000589">
    <property type="component" value="Chromosome 12"/>
</dbReference>
<dbReference type="RNAct" id="Q61151">
    <property type="molecule type" value="protein"/>
</dbReference>
<dbReference type="Bgee" id="ENSMUSG00000021051">
    <property type="expression patterns" value="Expressed in rostral migratory stream and 228 other cell types or tissues"/>
</dbReference>
<dbReference type="ExpressionAtlas" id="Q61151">
    <property type="expression patterns" value="baseline and differential"/>
</dbReference>
<dbReference type="GO" id="GO:0005737">
    <property type="term" value="C:cytoplasm"/>
    <property type="evidence" value="ECO:0000304"/>
    <property type="project" value="MGI"/>
</dbReference>
<dbReference type="GO" id="GO:0005829">
    <property type="term" value="C:cytosol"/>
    <property type="evidence" value="ECO:0007669"/>
    <property type="project" value="Ensembl"/>
</dbReference>
<dbReference type="GO" id="GO:0000159">
    <property type="term" value="C:protein phosphatase type 2A complex"/>
    <property type="evidence" value="ECO:0007669"/>
    <property type="project" value="InterPro"/>
</dbReference>
<dbReference type="GO" id="GO:0019888">
    <property type="term" value="F:protein phosphatase regulator activity"/>
    <property type="evidence" value="ECO:0007669"/>
    <property type="project" value="InterPro"/>
</dbReference>
<dbReference type="GO" id="GO:0007165">
    <property type="term" value="P:signal transduction"/>
    <property type="evidence" value="ECO:0007669"/>
    <property type="project" value="InterPro"/>
</dbReference>
<dbReference type="FunFam" id="1.25.10.10:FF:000010">
    <property type="entry name" value="Serine/threonine-protein phosphatase 2A 56 kDa regulatory subunit"/>
    <property type="match status" value="1"/>
</dbReference>
<dbReference type="Gene3D" id="1.25.10.10">
    <property type="entry name" value="Leucine-rich Repeat Variant"/>
    <property type="match status" value="1"/>
</dbReference>
<dbReference type="InterPro" id="IPR011989">
    <property type="entry name" value="ARM-like"/>
</dbReference>
<dbReference type="InterPro" id="IPR016024">
    <property type="entry name" value="ARM-type_fold"/>
</dbReference>
<dbReference type="InterPro" id="IPR002554">
    <property type="entry name" value="PP2A_B56"/>
</dbReference>
<dbReference type="PANTHER" id="PTHR10257">
    <property type="entry name" value="SERINE/THREONINE PROTEIN PHOSPHATASE 2A PP2A REGULATORY SUBUNIT B"/>
    <property type="match status" value="1"/>
</dbReference>
<dbReference type="PANTHER" id="PTHR10257:SF92">
    <property type="entry name" value="SERINE_THREONINE-PROTEIN PHOSPHATASE 2A 56 KDA REGULATORY SUBUNIT EPSILON ISOFORM"/>
    <property type="match status" value="1"/>
</dbReference>
<dbReference type="Pfam" id="PF01603">
    <property type="entry name" value="B56"/>
    <property type="match status" value="1"/>
</dbReference>
<dbReference type="PIRSF" id="PIRSF028043">
    <property type="entry name" value="PP2A_B56"/>
    <property type="match status" value="1"/>
</dbReference>
<dbReference type="SUPFAM" id="SSF48371">
    <property type="entry name" value="ARM repeat"/>
    <property type="match status" value="1"/>
</dbReference>
<comment type="function">
    <text>The B regulatory subunit might modulate substrate selectivity and catalytic activity, and might also direct the localization of the catalytic enzyme to a particular subcellular compartment. Interacts with cyclin G in vitro.</text>
</comment>
<comment type="subunit">
    <text evidence="1">PP2A consists of a common heterodimeric core enzyme, composed of a 36 kDa catalytic subunit (subunit C) and a 65 kDa constant regulatory subunit (PR65 or subunit A), that associates with a variety of regulatory subunits. Proteins that associate with the core dimer include three families of regulatory subunits B (the R2/B/PR55/B55, R3/B''/PR72/PR130/PR59 and R5/B'/B56 families), the 48 kDa variable regulatory subunit, viral proteins, and cell signaling molecules. Interacts with SGO1. Found in a complex with at least ARL2, PPP2CB; PPP2R1A, PPP2R2A, PPP2R5E and TBCD (By similarity).</text>
</comment>
<comment type="subcellular location">
    <subcellularLocation>
        <location evidence="1">Cytoplasm</location>
    </subcellularLocation>
</comment>
<comment type="similarity">
    <text evidence="4">Belongs to the phosphatase 2A regulatory subunit B56 family.</text>
</comment>
<comment type="sequence caution" evidence="4">
    <conflict type="frameshift">
        <sequence resource="EMBL-CDS" id="AAB37234"/>
    </conflict>
</comment>
<comment type="sequence caution" evidence="4">
    <conflict type="erroneous initiation">
        <sequence resource="EMBL-CDS" id="BAD90335"/>
    </conflict>
    <text>Extended N-terminus.</text>
</comment>
<evidence type="ECO:0000250" key="1"/>
<evidence type="ECO:0000250" key="2">
    <source>
        <dbReference type="UniProtKB" id="Q16537"/>
    </source>
</evidence>
<evidence type="ECO:0000256" key="3">
    <source>
        <dbReference type="SAM" id="MobiDB-lite"/>
    </source>
</evidence>
<evidence type="ECO:0000305" key="4"/>
<sequence>MSSAPTTPPSVDKVDGFSRKSVRKARQKRSQSSSQFRSQGKPIELTPLPLLKDVPTSEQPELFLKKLQQCCVIFDFMDTLSDLKMKEYKRSTLNELVDYITISRGCLTEQTYPEVVRMVSCNIFRTLPPSDSNEFDPEEDEPTLEASWPHLQLVYEFFIRFLESQEFQPSIAKKYIDQKFVLQLLELFDSEDPRERDYLKTVLHRIYGKFLGLRAFIRKQINNIFLRFVYETEHFNGVAELLEILGSIINGFALPLKAEHKQFLVKVLIPLHTVRSLSLFHAQLAYCIVQFLEKDPSLTEPVIRGLMKFWPKTCSQKEVMFLGELEEILDVIEPSQFVKIQEPLFKQIAKCVSSPHFQVAERALYYWNNEYIMSLIEENSNVILPIMFSSLYRISKEHWNPAIVALVYNVLKAFMEMNSTMFDELTATYKSDRQREKKKEKEREELWKKLEDLELKRGLRRDGIIPT</sequence>
<feature type="initiator methionine" description="Removed" evidence="2">
    <location>
        <position position="1"/>
    </location>
</feature>
<feature type="chain" id="PRO_0000071455" description="Serine/threonine-protein phosphatase 2A 56 kDa regulatory subunit epsilon isoform">
    <location>
        <begin position="2"/>
        <end position="467"/>
    </location>
</feature>
<feature type="region of interest" description="Disordered" evidence="3">
    <location>
        <begin position="1"/>
        <end position="39"/>
    </location>
</feature>
<feature type="compositionally biased region" description="Basic residues" evidence="3">
    <location>
        <begin position="20"/>
        <end position="29"/>
    </location>
</feature>
<feature type="compositionally biased region" description="Low complexity" evidence="3">
    <location>
        <begin position="30"/>
        <end position="39"/>
    </location>
</feature>
<feature type="modified residue" description="N-acetylserine" evidence="2">
    <location>
        <position position="2"/>
    </location>
</feature>
<feature type="modified residue" description="Phosphothreonine" evidence="2">
    <location>
        <position position="7"/>
    </location>
</feature>
<feature type="modified residue" description="Phosphoserine" evidence="2">
    <location>
        <position position="30"/>
    </location>
</feature>
<feature type="modified residue" description="Phosphoserine" evidence="2">
    <location>
        <position position="32"/>
    </location>
</feature>
<feature type="modified residue" description="Phosphoserine" evidence="2">
    <location>
        <position position="34"/>
    </location>
</feature>
<feature type="sequence conflict" description="In Ref. 4; AAB37234." evidence="4" ref="4">
    <original>F</original>
    <variation>C</variation>
    <location>
        <position position="74"/>
    </location>
</feature>
<feature type="sequence conflict" description="In Ref. 4; AAB37234." evidence="4" ref="4">
    <original>L</original>
    <variation>W</variation>
    <location>
        <position position="162"/>
    </location>
</feature>
<feature type="sequence conflict" description="In Ref. 4; AAB37234." evidence="4" ref="4">
    <original>F</original>
    <variation>S</variation>
    <location>
        <position position="388"/>
    </location>
</feature>
<feature type="sequence conflict" description="In Ref. 4; AAB37234." evidence="4" ref="4">
    <original>N</original>
    <variation>T</variation>
    <location>
        <position position="409"/>
    </location>
</feature>
<gene>
    <name type="primary">Ppp2r5e</name>
    <name type="synonym">Kiaa4006</name>
</gene>
<name>2A5E_MOUSE</name>
<reference key="1">
    <citation type="journal article" date="2005" name="Science">
        <title>The transcriptional landscape of the mammalian genome.</title>
        <authorList>
            <person name="Carninci P."/>
            <person name="Kasukawa T."/>
            <person name="Katayama S."/>
            <person name="Gough J."/>
            <person name="Frith M.C."/>
            <person name="Maeda N."/>
            <person name="Oyama R."/>
            <person name="Ravasi T."/>
            <person name="Lenhard B."/>
            <person name="Wells C."/>
            <person name="Kodzius R."/>
            <person name="Shimokawa K."/>
            <person name="Bajic V.B."/>
            <person name="Brenner S.E."/>
            <person name="Batalov S."/>
            <person name="Forrest A.R."/>
            <person name="Zavolan M."/>
            <person name="Davis M.J."/>
            <person name="Wilming L.G."/>
            <person name="Aidinis V."/>
            <person name="Allen J.E."/>
            <person name="Ambesi-Impiombato A."/>
            <person name="Apweiler R."/>
            <person name="Aturaliya R.N."/>
            <person name="Bailey T.L."/>
            <person name="Bansal M."/>
            <person name="Baxter L."/>
            <person name="Beisel K.W."/>
            <person name="Bersano T."/>
            <person name="Bono H."/>
            <person name="Chalk A.M."/>
            <person name="Chiu K.P."/>
            <person name="Choudhary V."/>
            <person name="Christoffels A."/>
            <person name="Clutterbuck D.R."/>
            <person name="Crowe M.L."/>
            <person name="Dalla E."/>
            <person name="Dalrymple B.P."/>
            <person name="de Bono B."/>
            <person name="Della Gatta G."/>
            <person name="di Bernardo D."/>
            <person name="Down T."/>
            <person name="Engstrom P."/>
            <person name="Fagiolini M."/>
            <person name="Faulkner G."/>
            <person name="Fletcher C.F."/>
            <person name="Fukushima T."/>
            <person name="Furuno M."/>
            <person name="Futaki S."/>
            <person name="Gariboldi M."/>
            <person name="Georgii-Hemming P."/>
            <person name="Gingeras T.R."/>
            <person name="Gojobori T."/>
            <person name="Green R.E."/>
            <person name="Gustincich S."/>
            <person name="Harbers M."/>
            <person name="Hayashi Y."/>
            <person name="Hensch T.K."/>
            <person name="Hirokawa N."/>
            <person name="Hill D."/>
            <person name="Huminiecki L."/>
            <person name="Iacono M."/>
            <person name="Ikeo K."/>
            <person name="Iwama A."/>
            <person name="Ishikawa T."/>
            <person name="Jakt M."/>
            <person name="Kanapin A."/>
            <person name="Katoh M."/>
            <person name="Kawasawa Y."/>
            <person name="Kelso J."/>
            <person name="Kitamura H."/>
            <person name="Kitano H."/>
            <person name="Kollias G."/>
            <person name="Krishnan S.P."/>
            <person name="Kruger A."/>
            <person name="Kummerfeld S.K."/>
            <person name="Kurochkin I.V."/>
            <person name="Lareau L.F."/>
            <person name="Lazarevic D."/>
            <person name="Lipovich L."/>
            <person name="Liu J."/>
            <person name="Liuni S."/>
            <person name="McWilliam S."/>
            <person name="Madan Babu M."/>
            <person name="Madera M."/>
            <person name="Marchionni L."/>
            <person name="Matsuda H."/>
            <person name="Matsuzawa S."/>
            <person name="Miki H."/>
            <person name="Mignone F."/>
            <person name="Miyake S."/>
            <person name="Morris K."/>
            <person name="Mottagui-Tabar S."/>
            <person name="Mulder N."/>
            <person name="Nakano N."/>
            <person name="Nakauchi H."/>
            <person name="Ng P."/>
            <person name="Nilsson R."/>
            <person name="Nishiguchi S."/>
            <person name="Nishikawa S."/>
            <person name="Nori F."/>
            <person name="Ohara O."/>
            <person name="Okazaki Y."/>
            <person name="Orlando V."/>
            <person name="Pang K.C."/>
            <person name="Pavan W.J."/>
            <person name="Pavesi G."/>
            <person name="Pesole G."/>
            <person name="Petrovsky N."/>
            <person name="Piazza S."/>
            <person name="Reed J."/>
            <person name="Reid J.F."/>
            <person name="Ring B.Z."/>
            <person name="Ringwald M."/>
            <person name="Rost B."/>
            <person name="Ruan Y."/>
            <person name="Salzberg S.L."/>
            <person name="Sandelin A."/>
            <person name="Schneider C."/>
            <person name="Schoenbach C."/>
            <person name="Sekiguchi K."/>
            <person name="Semple C.A."/>
            <person name="Seno S."/>
            <person name="Sessa L."/>
            <person name="Sheng Y."/>
            <person name="Shibata Y."/>
            <person name="Shimada H."/>
            <person name="Shimada K."/>
            <person name="Silva D."/>
            <person name="Sinclair B."/>
            <person name="Sperling S."/>
            <person name="Stupka E."/>
            <person name="Sugiura K."/>
            <person name="Sultana R."/>
            <person name="Takenaka Y."/>
            <person name="Taki K."/>
            <person name="Tammoja K."/>
            <person name="Tan S.L."/>
            <person name="Tang S."/>
            <person name="Taylor M.S."/>
            <person name="Tegner J."/>
            <person name="Teichmann S.A."/>
            <person name="Ueda H.R."/>
            <person name="van Nimwegen E."/>
            <person name="Verardo R."/>
            <person name="Wei C.L."/>
            <person name="Yagi K."/>
            <person name="Yamanishi H."/>
            <person name="Zabarovsky E."/>
            <person name="Zhu S."/>
            <person name="Zimmer A."/>
            <person name="Hide W."/>
            <person name="Bult C."/>
            <person name="Grimmond S.M."/>
            <person name="Teasdale R.D."/>
            <person name="Liu E.T."/>
            <person name="Brusic V."/>
            <person name="Quackenbush J."/>
            <person name="Wahlestedt C."/>
            <person name="Mattick J.S."/>
            <person name="Hume D.A."/>
            <person name="Kai C."/>
            <person name="Sasaki D."/>
            <person name="Tomaru Y."/>
            <person name="Fukuda S."/>
            <person name="Kanamori-Katayama M."/>
            <person name="Suzuki M."/>
            <person name="Aoki J."/>
            <person name="Arakawa T."/>
            <person name="Iida J."/>
            <person name="Imamura K."/>
            <person name="Itoh M."/>
            <person name="Kato T."/>
            <person name="Kawaji H."/>
            <person name="Kawagashira N."/>
            <person name="Kawashima T."/>
            <person name="Kojima M."/>
            <person name="Kondo S."/>
            <person name="Konno H."/>
            <person name="Nakano K."/>
            <person name="Ninomiya N."/>
            <person name="Nishio T."/>
            <person name="Okada M."/>
            <person name="Plessy C."/>
            <person name="Shibata K."/>
            <person name="Shiraki T."/>
            <person name="Suzuki S."/>
            <person name="Tagami M."/>
            <person name="Waki K."/>
            <person name="Watahiki A."/>
            <person name="Okamura-Oho Y."/>
            <person name="Suzuki H."/>
            <person name="Kawai J."/>
            <person name="Hayashizaki Y."/>
        </authorList>
    </citation>
    <scope>NUCLEOTIDE SEQUENCE [LARGE SCALE MRNA]</scope>
    <source>
        <strain>C57BL/6J</strain>
        <strain>NOD</strain>
        <tissue>Skin</tissue>
        <tissue>Thymus</tissue>
    </source>
</reference>
<reference key="2">
    <citation type="journal article" date="2004" name="Genome Res.">
        <title>The status, quality, and expansion of the NIH full-length cDNA project: the Mammalian Gene Collection (MGC).</title>
        <authorList>
            <consortium name="The MGC Project Team"/>
        </authorList>
    </citation>
    <scope>NUCLEOTIDE SEQUENCE [LARGE SCALE MRNA]</scope>
    <source>
        <strain>C57BL/6J</strain>
        <tissue>Brain</tissue>
    </source>
</reference>
<reference key="3">
    <citation type="journal article" date="2003" name="DNA Res.">
        <title>Prediction of the coding sequences of mouse homologues of KIAA gene: II. The complete nucleotide sequences of 400 mouse KIAA-homologous cDNAs identified by screening of terminal sequences of cDNA clones randomly sampled from size-fractionated libraries.</title>
        <authorList>
            <person name="Okazaki N."/>
            <person name="Kikuno R."/>
            <person name="Ohara R."/>
            <person name="Inamoto S."/>
            <person name="Aizawa H."/>
            <person name="Yuasa S."/>
            <person name="Nakajima D."/>
            <person name="Nagase T."/>
            <person name="Ohara O."/>
            <person name="Koga H."/>
        </authorList>
    </citation>
    <scope>NUCLEOTIDE SEQUENCE [LARGE SCALE MRNA] OF 1-436</scope>
    <source>
        <tissue>Embryonic tail</tissue>
    </source>
</reference>
<reference key="4">
    <citation type="journal article" date="1996" name="Mol. Cell. Biol.">
        <title>p53-dependent association between cyclin G and the B' subunit of protein phosphatase 2A.</title>
        <authorList>
            <person name="Okamoto K."/>
            <person name="Kamibayashi C."/>
            <person name="Serrano M."/>
            <person name="Prives C."/>
            <person name="Mumby M.C."/>
            <person name="Beach D."/>
        </authorList>
    </citation>
    <scope>NUCLEOTIDE SEQUENCE [MRNA] OF 51-437</scope>
    <source>
        <tissue>Embryonic fibroblast</tissue>
    </source>
</reference>
<reference key="5">
    <citation type="journal article" date="2010" name="Cell">
        <title>A tissue-specific atlas of mouse protein phosphorylation and expression.</title>
        <authorList>
            <person name="Huttlin E.L."/>
            <person name="Jedrychowski M.P."/>
            <person name="Elias J.E."/>
            <person name="Goswami T."/>
            <person name="Rad R."/>
            <person name="Beausoleil S.A."/>
            <person name="Villen J."/>
            <person name="Haas W."/>
            <person name="Sowa M.E."/>
            <person name="Gygi S.P."/>
        </authorList>
    </citation>
    <scope>IDENTIFICATION BY MASS SPECTROMETRY [LARGE SCALE ANALYSIS]</scope>
    <source>
        <tissue>Brain</tissue>
        <tissue>Brown adipose tissue</tissue>
        <tissue>Heart</tissue>
        <tissue>Kidney</tissue>
        <tissue>Lung</tissue>
        <tissue>Spleen</tissue>
        <tissue>Testis</tissue>
    </source>
</reference>
<accession>Q61151</accession>
<accession>Q3V1I5</accession>
<accession>Q571M6</accession>
<accession>Q8C2M2</accession>
<protein>
    <recommendedName>
        <fullName>Serine/threonine-protein phosphatase 2A 56 kDa regulatory subunit epsilon isoform</fullName>
    </recommendedName>
    <alternativeName>
        <fullName>PP2A B subunit isoform B'-epsilon</fullName>
    </alternativeName>
    <alternativeName>
        <fullName>PP2A B subunit isoform B56-epsilon</fullName>
    </alternativeName>
    <alternativeName>
        <fullName>PP2A B subunit isoform PR61-epsilon</fullName>
    </alternativeName>
    <alternativeName>
        <fullName>PP2A B subunit isoform R5-epsilon</fullName>
    </alternativeName>
</protein>
<proteinExistence type="evidence at protein level"/>